<protein>
    <recommendedName>
        <fullName evidence="1">Arginine decarboxylase proenzyme</fullName>
        <shortName evidence="1">ADC</shortName>
        <shortName evidence="1">ArgDC</shortName>
        <ecNumber evidence="1">4.1.1.19</ecNumber>
    </recommendedName>
    <alternativeName>
        <fullName evidence="1">Pyruvoyl-dependent arginine decarboxylase</fullName>
    </alternativeName>
    <component>
        <recommendedName>
            <fullName evidence="1">Arginine decarboxylase beta chain</fullName>
        </recommendedName>
    </component>
    <component>
        <recommendedName>
            <fullName evidence="1">Arginine decarboxylase alpha chain</fullName>
        </recommendedName>
    </component>
</protein>
<sequence length="126" mass="14324">MQATAQVQTPVVGRHVYGELYGVDESLLKDEERLRRIVIEAAHIANMHLVEVNSWKFKGGDKEGVSVIALVLESHIAIHTWPVYNFATVDVYTCGEHSDPMAAFRYIVSQLNPKRFTVNYSDRSYK</sequence>
<evidence type="ECO:0000255" key="1">
    <source>
        <dbReference type="HAMAP-Rule" id="MF_01298"/>
    </source>
</evidence>
<organism>
    <name type="scientific">Pyrobaculum calidifontis (strain DSM 21063 / JCM 11548 / VA1)</name>
    <dbReference type="NCBI Taxonomy" id="410359"/>
    <lineage>
        <taxon>Archaea</taxon>
        <taxon>Thermoproteota</taxon>
        <taxon>Thermoprotei</taxon>
        <taxon>Thermoproteales</taxon>
        <taxon>Thermoproteaceae</taxon>
        <taxon>Pyrobaculum</taxon>
    </lineage>
</organism>
<name>ARGDC_PYRCJ</name>
<feature type="chain" id="PRO_0000364121" description="Arginine decarboxylase beta chain" evidence="1">
    <location>
        <begin position="1"/>
        <end position="73"/>
    </location>
</feature>
<feature type="chain" id="PRO_0000364122" description="Arginine decarboxylase alpha chain" evidence="1">
    <location>
        <begin position="74"/>
        <end position="126"/>
    </location>
</feature>
<feature type="active site" description="Schiff-base intermediate with substrate; via pyruvic acid" evidence="1">
    <location>
        <position position="74"/>
    </location>
</feature>
<feature type="active site" description="Proton acceptor; for processing activity" evidence="1">
    <location>
        <position position="79"/>
    </location>
</feature>
<feature type="active site" description="Proton donor; for catalytic activity" evidence="1">
    <location>
        <position position="94"/>
    </location>
</feature>
<feature type="site" description="Cleavage (non-hydrolytic); by autolysis" evidence="1">
    <location>
        <begin position="73"/>
        <end position="74"/>
    </location>
</feature>
<feature type="modified residue" description="Pyruvic acid (Ser); by autocatalysis" evidence="1">
    <location>
        <position position="74"/>
    </location>
</feature>
<comment type="function">
    <text evidence="1">Specifically catalyzes the decarboxylation of L-arginine to agmatine. Has no S-adenosylmethionine decarboxylase (AdoMetDC) activity.</text>
</comment>
<comment type="catalytic activity">
    <reaction evidence="1">
        <text>L-arginine + H(+) = agmatine + CO2</text>
        <dbReference type="Rhea" id="RHEA:17641"/>
        <dbReference type="ChEBI" id="CHEBI:15378"/>
        <dbReference type="ChEBI" id="CHEBI:16526"/>
        <dbReference type="ChEBI" id="CHEBI:32682"/>
        <dbReference type="ChEBI" id="CHEBI:58145"/>
        <dbReference type="EC" id="4.1.1.19"/>
    </reaction>
</comment>
<comment type="cofactor">
    <cofactor evidence="1">
        <name>pyruvate</name>
        <dbReference type="ChEBI" id="CHEBI:15361"/>
    </cofactor>
    <text evidence="1">Binds 1 pyruvoyl group covalently per subunit.</text>
</comment>
<comment type="pathway">
    <text evidence="1">Amine and polyamine biosynthesis; agmatine biosynthesis; agmatine from L-arginine: step 1/1.</text>
</comment>
<comment type="subunit">
    <text evidence="1">Heterooctamer of four alpha and four beta chains arranged as a tetramer of alpha/beta heterodimers.</text>
</comment>
<comment type="PTM">
    <text evidence="1">Is synthesized initially as an inactive proenzyme. Formation of the active enzyme involves a self-maturation process in which the active site pyruvoyl group is generated from an internal serine residue via an autocatalytic post-translational modification. Two non-identical subunits are generated from the proenzyme in this reaction, and the pyruvate is formed at the N-terminus of the alpha chain, which is derived from the carboxyl end of the proenzyme. The post-translation cleavage follows an unusual pathway, termed non-hydrolytic serinolysis, in which the side chain hydroxyl group of the serine supplies its oxygen atom to form the C-terminus of the beta chain, while the remainder of the serine residue undergoes an oxidative deamination to produce ammonia and the pyruvoyl group blocking the N-terminus of the alpha chain.</text>
</comment>
<comment type="similarity">
    <text evidence="1">Belongs to the prokaryotic AdoMetDC family. Type 1 subfamily.</text>
</comment>
<proteinExistence type="inferred from homology"/>
<gene>
    <name type="ordered locus">Pcal_0636</name>
</gene>
<dbReference type="EC" id="4.1.1.19" evidence="1"/>
<dbReference type="EMBL" id="CP000561">
    <property type="protein sequence ID" value="ABO08062.1"/>
    <property type="molecule type" value="Genomic_DNA"/>
</dbReference>
<dbReference type="RefSeq" id="WP_011849320.1">
    <property type="nucleotide sequence ID" value="NC_009073.1"/>
</dbReference>
<dbReference type="SMR" id="A3MTU5"/>
<dbReference type="STRING" id="410359.Pcal_0636"/>
<dbReference type="GeneID" id="4908978"/>
<dbReference type="KEGG" id="pcl:Pcal_0636"/>
<dbReference type="eggNOG" id="arCOG00279">
    <property type="taxonomic scope" value="Archaea"/>
</dbReference>
<dbReference type="HOGENOM" id="CLU_125470_2_1_2"/>
<dbReference type="OrthoDB" id="114016at2157"/>
<dbReference type="UniPathway" id="UPA00186">
    <property type="reaction ID" value="UER00284"/>
</dbReference>
<dbReference type="Proteomes" id="UP000001431">
    <property type="component" value="Chromosome"/>
</dbReference>
<dbReference type="GO" id="GO:0005829">
    <property type="term" value="C:cytosol"/>
    <property type="evidence" value="ECO:0007669"/>
    <property type="project" value="TreeGrafter"/>
</dbReference>
<dbReference type="GO" id="GO:0008792">
    <property type="term" value="F:arginine decarboxylase activity"/>
    <property type="evidence" value="ECO:0007669"/>
    <property type="project" value="UniProtKB-UniRule"/>
</dbReference>
<dbReference type="GO" id="GO:0006527">
    <property type="term" value="P:arginine catabolic process"/>
    <property type="evidence" value="ECO:0007669"/>
    <property type="project" value="UniProtKB-UniRule"/>
</dbReference>
<dbReference type="GO" id="GO:0006596">
    <property type="term" value="P:polyamine biosynthetic process"/>
    <property type="evidence" value="ECO:0007669"/>
    <property type="project" value="UniProtKB-UniRule"/>
</dbReference>
<dbReference type="FunFam" id="3.60.90.10:FF:000005">
    <property type="entry name" value="Arginine decarboxylase proenzyme"/>
    <property type="match status" value="1"/>
</dbReference>
<dbReference type="Gene3D" id="3.60.90.10">
    <property type="entry name" value="S-adenosylmethionine decarboxylase"/>
    <property type="match status" value="1"/>
</dbReference>
<dbReference type="HAMAP" id="MF_00464">
    <property type="entry name" value="AdoMetDC_1"/>
    <property type="match status" value="1"/>
</dbReference>
<dbReference type="HAMAP" id="MF_01298">
    <property type="entry name" value="ArgDC"/>
    <property type="match status" value="1"/>
</dbReference>
<dbReference type="InterPro" id="IPR003826">
    <property type="entry name" value="AdoMetDC_fam_prok"/>
</dbReference>
<dbReference type="InterPro" id="IPR027549">
    <property type="entry name" value="ArgDC"/>
</dbReference>
<dbReference type="InterPro" id="IPR016067">
    <property type="entry name" value="S-AdoMet_deCO2ase_core"/>
</dbReference>
<dbReference type="InterPro" id="IPR017716">
    <property type="entry name" value="S-AdoMet_deCOase_pro-enz"/>
</dbReference>
<dbReference type="NCBIfam" id="TIGR03330">
    <property type="entry name" value="SAM_DCase_Bsu"/>
    <property type="match status" value="1"/>
</dbReference>
<dbReference type="PANTHER" id="PTHR33866">
    <property type="entry name" value="S-ADENOSYLMETHIONINE DECARBOXYLASE PROENZYME"/>
    <property type="match status" value="1"/>
</dbReference>
<dbReference type="PANTHER" id="PTHR33866:SF2">
    <property type="entry name" value="S-ADENOSYLMETHIONINE DECARBOXYLASE PROENZYME"/>
    <property type="match status" value="1"/>
</dbReference>
<dbReference type="Pfam" id="PF02675">
    <property type="entry name" value="AdoMet_dc"/>
    <property type="match status" value="1"/>
</dbReference>
<dbReference type="SUPFAM" id="SSF56276">
    <property type="entry name" value="S-adenosylmethionine decarboxylase"/>
    <property type="match status" value="1"/>
</dbReference>
<accession>A3MTU5</accession>
<reference key="1">
    <citation type="submission" date="2007-02" db="EMBL/GenBank/DDBJ databases">
        <title>Complete sequence of Pyrobaculum calidifontis JCM 11548.</title>
        <authorList>
            <consortium name="US DOE Joint Genome Institute"/>
            <person name="Copeland A."/>
            <person name="Lucas S."/>
            <person name="Lapidus A."/>
            <person name="Barry K."/>
            <person name="Glavina del Rio T."/>
            <person name="Dalin E."/>
            <person name="Tice H."/>
            <person name="Pitluck S."/>
            <person name="Chain P."/>
            <person name="Malfatti S."/>
            <person name="Shin M."/>
            <person name="Vergez L."/>
            <person name="Schmutz J."/>
            <person name="Larimer F."/>
            <person name="Land M."/>
            <person name="Hauser L."/>
            <person name="Kyrpides N."/>
            <person name="Mikhailova N."/>
            <person name="Cozen A.E."/>
            <person name="Fitz-Gibbon S.T."/>
            <person name="House C.H."/>
            <person name="Saltikov C."/>
            <person name="Lowe T.M."/>
            <person name="Richardson P."/>
        </authorList>
    </citation>
    <scope>NUCLEOTIDE SEQUENCE [LARGE SCALE GENOMIC DNA]</scope>
    <source>
        <strain>DSM 21063 / JCM 11548 / VA1</strain>
    </source>
</reference>
<keyword id="KW-0068">Autocatalytic cleavage</keyword>
<keyword id="KW-0210">Decarboxylase</keyword>
<keyword id="KW-0456">Lyase</keyword>
<keyword id="KW-0620">Polyamine biosynthesis</keyword>
<keyword id="KW-0670">Pyruvate</keyword>
<keyword id="KW-0704">Schiff base</keyword>
<keyword id="KW-0865">Zymogen</keyword>